<feature type="chain" id="PRO_0000058357" description="Guanyl-specific ribonuclease pgl-1">
    <location>
        <begin position="1"/>
        <end position="730"/>
    </location>
</feature>
<feature type="region of interest" description="Involved in dimerization" evidence="11">
    <location>
        <begin position="205"/>
        <end position="447"/>
    </location>
</feature>
<feature type="region of interest" description="Disordered" evidence="1">
    <location>
        <begin position="452"/>
        <end position="475"/>
    </location>
</feature>
<feature type="region of interest" description="Disordered" evidence="1">
    <location>
        <begin position="567"/>
        <end position="639"/>
    </location>
</feature>
<feature type="region of interest" description="RNA-binding RGG-box" evidence="19">
    <location>
        <begin position="674"/>
        <end position="730"/>
    </location>
</feature>
<feature type="region of interest" description="Disordered" evidence="1">
    <location>
        <begin position="686"/>
        <end position="730"/>
    </location>
</feature>
<feature type="compositionally biased region" description="Polar residues" evidence="1">
    <location>
        <begin position="452"/>
        <end position="472"/>
    </location>
</feature>
<feature type="compositionally biased region" description="Polar residues" evidence="1">
    <location>
        <begin position="568"/>
        <end position="595"/>
    </location>
</feature>
<feature type="active site" description="Proton acceptor" evidence="11">
    <location>
        <position position="437"/>
    </location>
</feature>
<feature type="mutagenesis site" description="Abolished catalytic activity. No effect on dimerization or RNA-binding." evidence="11">
    <original>Q</original>
    <variation>A</variation>
    <location>
        <position position="301"/>
    </location>
</feature>
<feature type="mutagenesis site" description="No effect on catalytic activity." evidence="11">
    <original>E</original>
    <variation>Q</variation>
    <location>
        <position position="401"/>
    </location>
</feature>
<feature type="mutagenesis site" description="Reduced catalytic activity." evidence="11">
    <original>H</original>
    <variation>A</variation>
    <location>
        <position position="437"/>
    </location>
</feature>
<protein>
    <recommendedName>
        <fullName evidence="17">Guanyl-specific ribonuclease pgl-1</fullName>
        <ecNumber evidence="11">4.6.1.24</ecNumber>
    </recommendedName>
    <alternativeName>
        <fullName>P granule abnormality protein 1</fullName>
    </alternativeName>
</protein>
<sequence length="730" mass="78454">MEANKREIVDFGGLRSYFFPNLAHYITKNDEELFNNTSQANKLAAFVLGASKDAPGDEDILEMILPNDANAAVIAAGMDVCLLLGDKFRPKFDAAAEKLSGLGHAHDLVSVIDDDKKLGMLARKAKLKKTEDAKILQALLKVIAIDDAAEKFVELTELVSQLDLDFDVYVLTKILGLISEETSDEVDIIRDNVVNAFDSCKPLLKQLMLDGPKSEPADPFISLLMDPLEESVGKVVNHIAQLFEEASKNEGDESLVLRSQLGYQLFFLIVRSLADGKREVSKKILSGIPTSVRAEVFPGLQRSVYKSAVFLGNHIIQVLLGSKKSFEDWDVVGVAKDLESAWKRRAIAELIKKFQVSILEQCFDKPVPLIPQSPLNNDAVIDNVNKALQFALWLTEFYGSENETEALGELRFLDSTSKNLLVDSFKKFVQGINSKTHVTRIVESLEKCCLSDTPSGRKSNVQPSTSQQQDSAYTKEEMTTVHNTYSVNTKAQVLNGLSDTNSSGLLVDSKDSLSLQEISCDEVDSSTLLSSSRNIGEGVTVKAVDPVPEKVNDAQQQQTVNEIEMASDANQDTSSSASPEVAPSFSTDGWDSPTKSVALPPGMQQIDEEETTVADKDSTPQPQARAETAWGSGDATPMPLPAPTNQYKVSGFGEAKVAKGFGQFAPTSSAYGGGGGRGGYGGGDRGGRGGYGGDRGGRGGYGGGDRGGRGGYGGDRGRGGYGGRGGRGGF</sequence>
<accession>Q9TZQ3</accession>
<name>PGL1_CAEEL</name>
<reference evidence="17" key="1">
    <citation type="journal article" date="1998" name="Cell">
        <title>pgl-1, a predicted RNA-binding component of germ granules, is essential for fertility in C. elegans.</title>
        <authorList>
            <person name="Kawasaki I."/>
            <person name="Shim Y.-H."/>
            <person name="Kirchner J."/>
            <person name="Kaminker J."/>
            <person name="Wood W.B."/>
            <person name="Strome S."/>
        </authorList>
    </citation>
    <scope>NUCLEOTIDE SEQUENCE [MRNA]</scope>
    <scope>FUNCTION</scope>
    <scope>SUBCELLULAR LOCATION</scope>
    <scope>TISSUE SPECIFICITY</scope>
    <scope>DEVELOPMENTAL STAGE</scope>
    <scope>DOMAIN</scope>
    <scope>DISRUPTION PHENOTYPE</scope>
    <source>
        <strain evidence="16">Bristol N2</strain>
    </source>
</reference>
<reference key="2">
    <citation type="journal article" date="1998" name="Science">
        <title>Genome sequence of the nematode C. elegans: a platform for investigating biology.</title>
        <authorList>
            <consortium name="The C. elegans sequencing consortium"/>
        </authorList>
    </citation>
    <scope>NUCLEOTIDE SEQUENCE [LARGE SCALE GENOMIC DNA]</scope>
    <source>
        <strain>Bristol N2</strain>
    </source>
</reference>
<reference evidence="17" key="3">
    <citation type="journal article" date="2001" name="Development">
        <title>An isoform of eIF4E is a component of germ granules and is required for spermatogenesis in C. elegans.</title>
        <authorList>
            <person name="Amiri A."/>
            <person name="Keiper B.D."/>
            <person name="Kawasaki I."/>
            <person name="Fan Y."/>
            <person name="Kohara Y."/>
            <person name="Rhoads R.E."/>
            <person name="Strome S."/>
        </authorList>
    </citation>
    <scope>INTERACTION WITH IFE-1</scope>
    <source>
        <strain evidence="2">Bristol N2</strain>
    </source>
</reference>
<reference key="4">
    <citation type="journal article" date="2004" name="Genetics">
        <title>The PGL family proteins associate with germ granules and function redundantly in Caenorhabditis elegans germline development.</title>
        <authorList>
            <person name="Kawasaki I."/>
            <person name="Amiri A."/>
            <person name="Fan Y."/>
            <person name="Meyer N."/>
            <person name="Dunkelbarger S."/>
            <person name="Motohashi T."/>
            <person name="Karashima T."/>
            <person name="Bossinger O."/>
            <person name="Strome S."/>
        </authorList>
    </citation>
    <scope>FUNCTION</scope>
    <scope>SUBUNIT</scope>
    <scope>INTERACTION WITH PGL-2 AND PGL-3</scope>
    <scope>SUBCELLULAR LOCATION</scope>
    <scope>TISSUE SPECIFICITY</scope>
    <scope>DEVELOPMENTAL STAGE</scope>
    <scope>DISRUPTION PHENOTYPE</scope>
</reference>
<reference key="5">
    <citation type="journal article" date="2009" name="Autophagy">
        <title>epg-1 functions in autophagy-regulated processes and may encode a highly divergent Atg13 homolog in C. elegans.</title>
        <authorList>
            <person name="Tian E."/>
            <person name="Wang F."/>
            <person name="Han J."/>
            <person name="Zhang H."/>
        </authorList>
    </citation>
    <scope>DEVELOPMENTAL STAGE</scope>
</reference>
<reference key="6">
    <citation type="journal article" date="2009" name="Cell">
        <title>SEPA-1 mediates the specific recognition and degradation of P granule components by autophagy in C. elegans.</title>
        <authorList>
            <person name="Zhang Y."/>
            <person name="Yan L."/>
            <person name="Zhou Z."/>
            <person name="Yang P."/>
            <person name="Tian E."/>
            <person name="Zhang K."/>
            <person name="Zhao Y."/>
            <person name="Li Z."/>
            <person name="Song B."/>
            <person name="Han J."/>
            <person name="Miao L."/>
            <person name="Zhang H."/>
        </authorList>
    </citation>
    <scope>SUBCELLULAR LOCATION</scope>
</reference>
<reference key="7">
    <citation type="journal article" date="2011" name="J. Cell Biol.">
        <title>PGL proteins self associate and bind RNPs to mediate germ granule assembly in C. elegans.</title>
        <authorList>
            <person name="Hanazawa M."/>
            <person name="Yonetani M."/>
            <person name="Sugimoto A."/>
        </authorList>
    </citation>
    <scope>FUNCTION</scope>
    <scope>SUBCELLULAR LOCATION</scope>
    <scope>DOMAIN</scope>
    <scope>DISRUPTION PHENOTYPE</scope>
</reference>
<reference key="8">
    <citation type="journal article" date="2013" name="Mol. Cell">
        <title>Arginine methylation modulates autophagic degradation of PGL granules in C. elegans.</title>
        <authorList>
            <person name="Li S."/>
            <person name="Yang P."/>
            <person name="Tian E."/>
            <person name="Zhang H."/>
        </authorList>
    </citation>
    <scope>INTERACTION WITH PRMT-1</scope>
    <scope>SUBCELLULAR LOCATION</scope>
    <scope>METHYLATION</scope>
</reference>
<reference key="9">
    <citation type="journal article" date="2014" name="Curr. Biol.">
        <title>Germ-granule components prevent somatic development in the C. elegans germline.</title>
        <authorList>
            <person name="Updike D.L."/>
            <person name="Knutson A.K."/>
            <person name="Egelhofer T.A."/>
            <person name="Campbell A.C."/>
            <person name="Strome S."/>
        </authorList>
    </citation>
    <scope>FUNCTION</scope>
    <scope>DISRUPTION PHENOTYPE</scope>
</reference>
<reference key="10">
    <citation type="journal article" date="2014" name="Elife">
        <title>Regulation of RNA granule dynamics by phosphorylation of serine-rich, intrinsically disordered proteins in C. elegans.</title>
        <authorList>
            <person name="Wang J.T."/>
            <person name="Smith J."/>
            <person name="Chen B.C."/>
            <person name="Schmidt H."/>
            <person name="Rasoloson D."/>
            <person name="Paix A."/>
            <person name="Lambrus B.G."/>
            <person name="Calidas D."/>
            <person name="Betzig E."/>
            <person name="Seydoux G."/>
        </authorList>
    </citation>
    <scope>INTERACTION WITH MEG-1; MEG-3 AND MEG-4</scope>
</reference>
<reference key="11">
    <citation type="journal article" date="2016" name="J. Cell Sci.">
        <title>Loss of PGL-1 and PGL-3, members of a family of constitutive germ-granule components, promotes germline apoptosis in C. elegans.</title>
        <authorList>
            <person name="Min H."/>
            <person name="Shim Y.H."/>
            <person name="Kawasaki I."/>
        </authorList>
    </citation>
    <scope>FUNCTION</scope>
    <scope>SUBCELLULAR LOCATION</scope>
    <scope>DISRUPTION PHENOTYPE</scope>
</reference>
<reference key="12">
    <citation type="journal article" date="2016" name="Sci. Rep.">
        <title>Somatically expressed germ-granule components, PGL-1 and PGL-3, repress programmed cell death in C. elegans.</title>
        <authorList>
            <person name="Al-Amin M."/>
            <person name="Min H."/>
            <person name="Shim Y.H."/>
            <person name="Kawasaki I."/>
        </authorList>
    </citation>
    <scope>FUNCTION</scope>
    <scope>SUBCELLULAR LOCATION</scope>
    <scope>TISSUE SPECIFICITY</scope>
    <scope>DEVELOPMENTAL STAGE</scope>
    <scope>DISRUPTION PHENOTYPE</scope>
</reference>
<reference key="13">
    <citation type="journal article" date="2017" name="Autophagy">
        <title>The composition of a protein aggregate modulates the specificity and efficiency of its autophagic degradation.</title>
        <authorList>
            <person name="Zhang G."/>
            <person name="Lin L."/>
            <person name="Qi D."/>
            <person name="Zhang H."/>
        </authorList>
    </citation>
    <scope>SUBCELLULAR LOCATION</scope>
    <scope>DEVELOPMENTAL STAGE</scope>
</reference>
<reference key="14">
    <citation type="journal article" date="2016" name="Proc. Natl. Acad. Sci. U.S.A.">
        <title>PGL germ granule assembly protein is a base-specific, single-stranded RNase.</title>
        <authorList>
            <person name="Aoki S.T."/>
            <person name="Kershner A.M."/>
            <person name="Bingman C.A."/>
            <person name="Wickens M."/>
            <person name="Kimble J."/>
        </authorList>
    </citation>
    <scope>X-RAY CRYSTALLOGRAPHY (3.60 ANGSTROMS) OF 205-447</scope>
    <scope>FUNCTION</scope>
    <scope>CATALYTIC ACTIVITY</scope>
    <scope>ACTIVE SITE</scope>
    <scope>COFACTOR</scope>
    <scope>ACTIVITY REGULATION</scope>
    <scope>SUBUNIT</scope>
    <scope>DOMAIN</scope>
    <scope>DISRUPTION PHENOTYPE</scope>
    <scope>MUTAGENESIS OF GLN-301; GLU-401 AND HIS-437</scope>
</reference>
<reference key="15">
    <citation type="journal article" date="2019" name="PLoS Genet.">
        <title>The demethylase NMAD-1 regulates DNA replication and repair in the Caenorhabditis elegans germline.</title>
        <authorList>
            <person name="Wang S.Y."/>
            <person name="Mao H."/>
            <person name="Shibuya H."/>
            <person name="Uzawa S."/>
            <person name="O'Brown Z.K."/>
            <person name="Wesenberg S."/>
            <person name="Shin N."/>
            <person name="Saito T.T."/>
            <person name="Gao J."/>
            <person name="Meyer B.J."/>
            <person name="Colaiacovo M.P."/>
            <person name="Greer E.L."/>
        </authorList>
    </citation>
    <scope>INTERACTION WITH NMAD-1</scope>
</reference>
<reference key="16">
    <citation type="journal article" date="2020" name="Nat. Commun.">
        <title>DEPS-1 is required for piRNA-dependent silencing and PIWI condensate organisation in Caenorhabditis elegans.</title>
        <authorList>
            <person name="Suen K.M."/>
            <person name="Braukmann F."/>
            <person name="Butler R."/>
            <person name="Bensaddek D."/>
            <person name="Akay A."/>
            <person name="Lin C.C."/>
            <person name="Milonaityte D."/>
            <person name="Doshi N."/>
            <person name="Sapetschnig A."/>
            <person name="Lamond A."/>
            <person name="Ladbury J.E."/>
            <person name="Miska E.A."/>
        </authorList>
    </citation>
    <scope>SUBCELLULAR LOCATION</scope>
</reference>
<organism>
    <name type="scientific">Caenorhabditis elegans</name>
    <dbReference type="NCBI Taxonomy" id="6239"/>
    <lineage>
        <taxon>Eukaryota</taxon>
        <taxon>Metazoa</taxon>
        <taxon>Ecdysozoa</taxon>
        <taxon>Nematoda</taxon>
        <taxon>Chromadorea</taxon>
        <taxon>Rhabditida</taxon>
        <taxon>Rhabditina</taxon>
        <taxon>Rhabditomorpha</taxon>
        <taxon>Rhabditoidea</taxon>
        <taxon>Rhabditidae</taxon>
        <taxon>Peloderinae</taxon>
        <taxon>Caenorhabditis</taxon>
    </lineage>
</organism>
<dbReference type="EC" id="4.6.1.24" evidence="11"/>
<dbReference type="EMBL" id="AF077868">
    <property type="protein sequence ID" value="AAC36100.1"/>
    <property type="molecule type" value="mRNA"/>
</dbReference>
<dbReference type="EMBL" id="BX284604">
    <property type="protein sequence ID" value="CCD62010.1"/>
    <property type="molecule type" value="Genomic_DNA"/>
</dbReference>
<dbReference type="PIR" id="T43317">
    <property type="entry name" value="T43317"/>
</dbReference>
<dbReference type="RefSeq" id="NP_001041065.1">
    <property type="nucleotide sequence ID" value="NM_001047600.3"/>
</dbReference>
<dbReference type="RefSeq" id="NP_001379582.1">
    <property type="nucleotide sequence ID" value="NM_001392325.1"/>
</dbReference>
<dbReference type="PDB" id="5CV1">
    <property type="method" value="X-ray"/>
    <property type="resolution" value="3.60 A"/>
    <property type="chains" value="A=205-447"/>
</dbReference>
<dbReference type="PDBsum" id="5CV1"/>
<dbReference type="SMR" id="Q9TZQ3"/>
<dbReference type="BioGRID" id="42581">
    <property type="interactions" value="16"/>
</dbReference>
<dbReference type="DIP" id="DIP-26042N"/>
<dbReference type="FunCoup" id="Q9TZQ3">
    <property type="interactions" value="137"/>
</dbReference>
<dbReference type="IntAct" id="Q9TZQ3">
    <property type="interactions" value="2"/>
</dbReference>
<dbReference type="STRING" id="6239.ZK381.4b.1"/>
<dbReference type="PaxDb" id="6239-ZK381.4b"/>
<dbReference type="EnsemblMetazoa" id="ZK381.4a.1">
    <property type="protein sequence ID" value="ZK381.4a.1"/>
    <property type="gene ID" value="WBGene00003992"/>
</dbReference>
<dbReference type="EnsemblMetazoa" id="ZK381.4a.2">
    <property type="protein sequence ID" value="ZK381.4a.2"/>
    <property type="gene ID" value="WBGene00003992"/>
</dbReference>
<dbReference type="GeneID" id="177461"/>
<dbReference type="UCSC" id="ZK381.4a.1">
    <property type="organism name" value="c. elegans"/>
</dbReference>
<dbReference type="AGR" id="WB:WBGene00003992"/>
<dbReference type="WormBase" id="ZK381.4a">
    <property type="protein sequence ID" value="CE25689"/>
    <property type="gene ID" value="WBGene00003992"/>
    <property type="gene designation" value="pgl-1"/>
</dbReference>
<dbReference type="eggNOG" id="ENOG502QVYU">
    <property type="taxonomic scope" value="Eukaryota"/>
</dbReference>
<dbReference type="GeneTree" id="ENSGT00970000196090"/>
<dbReference type="HOGENOM" id="CLU_362575_0_0_1"/>
<dbReference type="InParanoid" id="Q9TZQ3"/>
<dbReference type="CD-CODE" id="73A75392">
    <property type="entry name" value="P-granule"/>
</dbReference>
<dbReference type="CD-CODE" id="75CAE956">
    <property type="entry name" value="Synthetic Condensate 000075"/>
</dbReference>
<dbReference type="CD-CODE" id="985E7A25">
    <property type="entry name" value="Synthetic Condensate 000077"/>
</dbReference>
<dbReference type="CD-CODE" id="AF5F0395">
    <property type="entry name" value="Synthetic Condensate 000141"/>
</dbReference>
<dbReference type="CD-CODE" id="F6300417">
    <property type="entry name" value="Synthetic Condensate 000082"/>
</dbReference>
<dbReference type="EvolutionaryTrace" id="Q9TZQ3"/>
<dbReference type="PRO" id="PR:Q9TZQ3"/>
<dbReference type="Proteomes" id="UP000001940">
    <property type="component" value="Chromosome IV"/>
</dbReference>
<dbReference type="Bgee" id="WBGene00003992">
    <property type="expression patterns" value="Expressed in adult organism and 4 other cell types or tissues"/>
</dbReference>
<dbReference type="ExpressionAtlas" id="Q9TZQ3">
    <property type="expression patterns" value="baseline and differential"/>
</dbReference>
<dbReference type="GO" id="GO:0043186">
    <property type="term" value="C:P granule"/>
    <property type="evidence" value="ECO:0000314"/>
    <property type="project" value="UniProtKB"/>
</dbReference>
<dbReference type="GO" id="GO:0042802">
    <property type="term" value="F:identical protein binding"/>
    <property type="evidence" value="ECO:0000353"/>
    <property type="project" value="WormBase"/>
</dbReference>
<dbReference type="GO" id="GO:0016829">
    <property type="term" value="F:lyase activity"/>
    <property type="evidence" value="ECO:0007669"/>
    <property type="project" value="UniProtKB-KW"/>
</dbReference>
<dbReference type="GO" id="GO:0003729">
    <property type="term" value="F:mRNA binding"/>
    <property type="evidence" value="ECO:0000318"/>
    <property type="project" value="GO_Central"/>
</dbReference>
<dbReference type="GO" id="GO:0046589">
    <property type="term" value="F:ribonuclease T1 activity"/>
    <property type="evidence" value="ECO:0007669"/>
    <property type="project" value="UniProtKB-EC"/>
</dbReference>
<dbReference type="GO" id="GO:0003723">
    <property type="term" value="F:RNA binding"/>
    <property type="evidence" value="ECO:0000250"/>
    <property type="project" value="WormBase"/>
</dbReference>
<dbReference type="GO" id="GO:0004521">
    <property type="term" value="F:RNA endonuclease activity"/>
    <property type="evidence" value="ECO:0000314"/>
    <property type="project" value="WormBase"/>
</dbReference>
<dbReference type="GO" id="GO:0003724">
    <property type="term" value="F:RNA helicase activity"/>
    <property type="evidence" value="ECO:0000318"/>
    <property type="project" value="GO_Central"/>
</dbReference>
<dbReference type="GO" id="GO:0007276">
    <property type="term" value="P:gamete generation"/>
    <property type="evidence" value="ECO:0000315"/>
    <property type="project" value="WormBase"/>
</dbReference>
<dbReference type="GO" id="GO:0042078">
    <property type="term" value="P:germ-line stem cell division"/>
    <property type="evidence" value="ECO:0000315"/>
    <property type="project" value="WormBase"/>
</dbReference>
<dbReference type="GO" id="GO:0006406">
    <property type="term" value="P:mRNA export from nucleus"/>
    <property type="evidence" value="ECO:0000318"/>
    <property type="project" value="GO_Central"/>
</dbReference>
<dbReference type="GO" id="GO:0000398">
    <property type="term" value="P:mRNA splicing, via spliceosome"/>
    <property type="evidence" value="ECO:0000318"/>
    <property type="project" value="GO_Central"/>
</dbReference>
<dbReference type="GO" id="GO:0048477">
    <property type="term" value="P:oogenesis"/>
    <property type="evidence" value="ECO:0000315"/>
    <property type="project" value="WormBase"/>
</dbReference>
<dbReference type="GO" id="GO:0030719">
    <property type="term" value="P:P granule organization"/>
    <property type="evidence" value="ECO:0000315"/>
    <property type="project" value="WormBase"/>
</dbReference>
<dbReference type="GO" id="GO:0022414">
    <property type="term" value="P:reproductive process"/>
    <property type="evidence" value="ECO:0000315"/>
    <property type="project" value="WormBase"/>
</dbReference>
<evidence type="ECO:0000256" key="1">
    <source>
        <dbReference type="SAM" id="MobiDB-lite"/>
    </source>
</evidence>
<evidence type="ECO:0000269" key="2">
    <source>
    </source>
</evidence>
<evidence type="ECO:0000269" key="3">
    <source>
    </source>
</evidence>
<evidence type="ECO:0000269" key="4">
    <source>
    </source>
</evidence>
<evidence type="ECO:0000269" key="5">
    <source>
    </source>
</evidence>
<evidence type="ECO:0000269" key="6">
    <source>
    </source>
</evidence>
<evidence type="ECO:0000269" key="7">
    <source>
    </source>
</evidence>
<evidence type="ECO:0000269" key="8">
    <source>
    </source>
</evidence>
<evidence type="ECO:0000269" key="9">
    <source>
    </source>
</evidence>
<evidence type="ECO:0000269" key="10">
    <source>
    </source>
</evidence>
<evidence type="ECO:0000269" key="11">
    <source>
    </source>
</evidence>
<evidence type="ECO:0000269" key="12">
    <source>
    </source>
</evidence>
<evidence type="ECO:0000269" key="13">
    <source>
    </source>
</evidence>
<evidence type="ECO:0000269" key="14">
    <source>
    </source>
</evidence>
<evidence type="ECO:0000269" key="15">
    <source>
    </source>
</evidence>
<evidence type="ECO:0000269" key="16">
    <source>
    </source>
</evidence>
<evidence type="ECO:0000305" key="17"/>
<evidence type="ECO:0000305" key="18">
    <source>
    </source>
</evidence>
<evidence type="ECO:0000305" key="19">
    <source>
    </source>
</evidence>
<evidence type="ECO:0000312" key="20">
    <source>
        <dbReference type="WormBase" id="ZK381.4a"/>
    </source>
</evidence>
<comment type="function">
    <text evidence="3 6 8 10 11 12 16">Guanyl-specific endoribonuclease which cleaves the phosphodiester bond in single-stranded RNA between the 3'-guanylic residue and the 5'-OH residue of adjacent nucleotide, resulting in the formation of a corresponding 2',3'-cyclic phosphate intermediate (PubMed:26787882). Together with the P-granule component pgl-3, is involved in the formation of P-granules (PubMed:21402787, PubMed:24746798). Together with pgl-3, probably recruits other granule components such as pos-1, mex-3 and glh-1 to P-granules (PubMed:21402787). In addition, may act redundantly with pgl-3 to protect germ cells from excessive germline apoptosis during normal oogenesis and development of the two gonadal arms (PubMed:26598553). This may in part be through regulating the localization of sir-2.1 which is involved in germ cell apoptosis (PubMed:26598553). May protect somatic cells from excessive apoptosis during normal development (PubMed:27650246). Essential role in male and female postembryonic germline development; maternally provided protein maintains a population of proliferating germ cells and zygotic expression is required for correct oogenesis (PubMed:15238518, PubMed:24746798, PubMed:9741628).</text>
</comment>
<comment type="catalytic activity">
    <reaction evidence="11">
        <text>[RNA] containing guanosine + H2O = an [RNA fragment]-3'-guanosine-3'-phosphate + a 5'-hydroxy-ribonucleotide-3'-[RNA fragment].</text>
        <dbReference type="EC" id="4.6.1.24"/>
    </reaction>
</comment>
<comment type="cofactor">
    <text evidence="11">Does not require metal ions for catalytic activity.</text>
</comment>
<comment type="activity regulation">
    <text evidence="11">Not inhibited by RNase inhibitor RNasin.</text>
</comment>
<comment type="subunit">
    <text evidence="2 3 7 9 11 14">Homodimer (PubMed:15238518, PubMed:26787882). Interacts with pgl-2 and pgl-3; this association is not required for P-granule localization of either pgl-2 or pgl-3 (PubMed:15238518). Interacts with ife-1 (PubMed:11641215, PubMed:15238518). Interacts with prmt-1; the interaction is direct (PubMed:24140420). Interacts with nmad-1 (PubMed:31283754). Interacts with P granule components meg-1, meg-3 and meg-4 (PubMed:25535836).</text>
</comment>
<comment type="interaction">
    <interactant intactId="EBI-332200">
        <id>Q9TZQ3</id>
    </interactant>
    <interactant intactId="EBI-330148">
        <id>O45551</id>
        <label>ife-1</label>
    </interactant>
    <organismsDiffer>false</organismsDiffer>
    <experiments>2</experiments>
</comment>
<comment type="subcellular location">
    <subcellularLocation>
        <location evidence="3 4 6 7 10 12 13 15 16">Cytoplasmic granule</location>
    </subcellularLocation>
    <text evidence="3 4 6 7 12 15 16">Localizes to P granules in germline precursor cells (PubMed:19167332, PubMed:24140420, PubMed:27650246, PubMed:28806108, PubMed:9741628). Localizes to P granules in germ cells at all stages of development except in spermatogenesis (PubMed:15238518). Co-localizes with pgl-3 in P-granules, but localization in P-granules is not dependent on an association with pgl-3 (PubMed:15238518, PubMed:21402787). At P-granules in the adult germline, co-localizes with deps-1 in the pachytene region and with prg-1 (PubMed:32843637).</text>
</comment>
<comment type="tissue specificity">
    <text evidence="3 12 16">Expressed in the germline (PubMed:15238518, PubMed:9741628). Expressed in most somatic cells (PubMed:27650246).</text>
</comment>
<comment type="developmental stage">
    <text evidence="3 5 12 13 16">Expressed throughout development from embryos to adults (PubMed:15238518, PubMed:27650246, PubMed:9741628). Not expressed in somatic cells of embryos (PubMed:28806108). First expressed in 1-cell embryos, and expression persists until the 4-cell stage (PubMed:15238518). Expression diminishes in somatic blastomeres, but remains in E and P3 blastomeres at the 8-cell stage, in P3 blastomeres at the 15-cell stage, and in P4 blastomeres at the 24-cell stage (PubMed:15238518). Expressed in the primordial germ cells Z2 and Z3 during the two-fold stage of embryogenesis (PubMed:15238518, PubMed:27650246). Levels are low in young larvae but increase at the end of larval development (PubMed:9741628). Expressed in germ blastomeres (PubMed:19377305).</text>
</comment>
<comment type="domain">
    <text evidence="18">The dimerization domain also acts as a hinge; changes in its structure probably impact oligomerization and RNA-binding.</text>
</comment>
<comment type="domain">
    <text evidence="6 19">The RNA-binding RGG-box is required for the recruitment of some P-granule components such as pos-1 and probably mRNA, but is dispensable for granule formation.</text>
</comment>
<comment type="PTM">
    <text evidence="7">Methylated at arginine residues in the RNA-binding RGG-box by prmt-1. Methylation promotes P-granule degradation by autophagy.</text>
</comment>
<comment type="disruption phenotype">
    <text evidence="3 6 8 10 11 12 16">Temperature-sensitive and are only fertile at 20 degrees Celsius (PubMed:26787882). 25% of progeny arresting as late embryos and 9% as larvae at 26 degrees Celsius (PubMed:15238518). Surviving progeny are sterile at 26 degrees Celsius, most likely due to germline proliferation defects (PubMed:15238518, PubMed:26787882, PubMed:9741628). The temperature-sensitive period extends from mid-larvae to young adults (PubMed:9741628). Germline defects include increased apoptosis in the gonad, fewer germ nuclei, no sperm and no oocytes in the gonad arms (PubMed:15238518, PubMed:26598553). Double knockout with pgl-3 results in 37% of progeny arresting as late embryos and 9% as larvae at 26 degrees Celsius (PubMed:15238518). Double knockout with pgl-3 enhances the temperature-sensitive sterility phenotype and germline defects of the pgl-1 single knockout (PubMed:15238518, PubMed:26598553). The gonads of the double knockout with pgl-3 degenerate as the adults age (PubMed:15238518). Triple knockout with pgl-2 and pgl-3 results in 58% of progeny arresting as late embryos and 5% as larvae at 26 degrees Celsius (PubMed:15238518). Double knockout with him-3 decreases the number of self-cross progeny in the him-3 single mutant (PubMed:15238518). Triple knockout with pgl-3 and him-3 further reduces the number of self-cross progeny as compared to the pgl-1 and him-3 double mutant and him-3 single mutant (PubMed:15238518). Double knockout with ced-1 results in an increased number of cell corpses in the gonad as compared to the ced-1 single mutant (PubMed:26598553). Conversely, double knockout with ced-1 results in reduced somatic cell apoptosis (PubMed:27650246). Triple knockout with ced-1 and hpl-2 partially recovers the reduced somatic cell apoptotic cell defect in the ced-1 and hpl-2 double knockout (PubMed:27650246). Triple knockout with ced-1 and hpl-2 and knockdown with either ced-3 or ced-4 reduces the somatic cell apoptosis defect in the ced-1, hpl-2 and pgl-1 triple knockout (PubMed:27650246). Double RNAi-mediated knockdown with pgl-1 results in a reduced number of pos-1, mex-1 and glh-1 positive granules in embryos (PubMed:21402787). Quadruple RNAi-mediated knockdown with glh-1, glh-4 and pgl-3 results in offspring that display 27-89% sterility, abnormal oocytes and do not have embryos in the uterus (PubMed:24746798). These sterile offspring still produce sperm (PubMed:24746798). Furthermore, these offspring may have compromised P-granule integrity as there is diffuse cytoplasmic localization of the P-granule component deps-1, which may cause germ cells to initiate somatic reprogramming (PubMed:24746798). RNAi-mediated knockdown in a double ced-1 and hpl-2 mutant background rescues the reduced somatic cell apoptotic cell defect in the ced-1 and hpl-2 double knockout (PubMed:27650246).</text>
</comment>
<proteinExistence type="evidence at protein level"/>
<gene>
    <name evidence="20" type="primary">pgl-1</name>
    <name evidence="20" type="ORF">ZK381.4</name>
</gene>
<keyword id="KW-0002">3D-structure</keyword>
<keyword id="KW-0217">Developmental protein</keyword>
<keyword id="KW-0221">Differentiation</keyword>
<keyword id="KW-0255">Endonuclease</keyword>
<keyword id="KW-0378">Hydrolase</keyword>
<keyword id="KW-0456">Lyase</keyword>
<keyword id="KW-0488">Methylation</keyword>
<keyword id="KW-0540">Nuclease</keyword>
<keyword id="KW-0896">Oogenesis</keyword>
<keyword id="KW-1185">Reference proteome</keyword>
<keyword id="KW-0677">Repeat</keyword>
<keyword id="KW-0694">RNA-binding</keyword>